<protein>
    <recommendedName>
        <fullName>Probable serine/threonine-protein kinase PknB</fullName>
        <ecNumber>2.7.11.1</ecNumber>
    </recommendedName>
</protein>
<reference key="1">
    <citation type="journal article" date="2003" name="Appl. Microbiol. Biotechnol.">
        <title>The Corynebacterium glutamicum genome: features and impacts on biotechnological processes.</title>
        <authorList>
            <person name="Ikeda M."/>
            <person name="Nakagawa S."/>
        </authorList>
    </citation>
    <scope>NUCLEOTIDE SEQUENCE [LARGE SCALE GENOMIC DNA]</scope>
    <source>
        <strain>ATCC 13032 / DSM 20300 / JCM 1318 / BCRC 11384 / CCUG 27702 / LMG 3730 / NBRC 12168 / NCIMB 10025 / NRRL B-2784 / 534</strain>
    </source>
</reference>
<reference key="2">
    <citation type="journal article" date="2003" name="J. Biotechnol.">
        <title>The complete Corynebacterium glutamicum ATCC 13032 genome sequence and its impact on the production of L-aspartate-derived amino acids and vitamins.</title>
        <authorList>
            <person name="Kalinowski J."/>
            <person name="Bathe B."/>
            <person name="Bartels D."/>
            <person name="Bischoff N."/>
            <person name="Bott M."/>
            <person name="Burkovski A."/>
            <person name="Dusch N."/>
            <person name="Eggeling L."/>
            <person name="Eikmanns B.J."/>
            <person name="Gaigalat L."/>
            <person name="Goesmann A."/>
            <person name="Hartmann M."/>
            <person name="Huthmacher K."/>
            <person name="Kraemer R."/>
            <person name="Linke B."/>
            <person name="McHardy A.C."/>
            <person name="Meyer F."/>
            <person name="Moeckel B."/>
            <person name="Pfefferle W."/>
            <person name="Puehler A."/>
            <person name="Rey D.A."/>
            <person name="Rueckert C."/>
            <person name="Rupp O."/>
            <person name="Sahm H."/>
            <person name="Wendisch V.F."/>
            <person name="Wiegraebe I."/>
            <person name="Tauch A."/>
        </authorList>
    </citation>
    <scope>NUCLEOTIDE SEQUENCE [LARGE SCALE GENOMIC DNA]</scope>
    <source>
        <strain>ATCC 13032 / DSM 20300 / JCM 1318 / BCRC 11384 / CCUG 27702 / LMG 3730 / NBRC 12168 / NCIMB 10025 / NRRL B-2784 / 534</strain>
    </source>
</reference>
<accession>Q8NU98</accession>
<keyword id="KW-0067">ATP-binding</keyword>
<keyword id="KW-0418">Kinase</keyword>
<keyword id="KW-0547">Nucleotide-binding</keyword>
<keyword id="KW-1185">Reference proteome</keyword>
<keyword id="KW-0677">Repeat</keyword>
<keyword id="KW-0723">Serine/threonine-protein kinase</keyword>
<keyword id="KW-0808">Transferase</keyword>
<dbReference type="EC" id="2.7.11.1"/>
<dbReference type="EMBL" id="BA000036">
    <property type="protein sequence ID" value="BAB97434.1"/>
    <property type="molecule type" value="Genomic_DNA"/>
</dbReference>
<dbReference type="EMBL" id="BX927148">
    <property type="protein sequence ID" value="CAF18609.1"/>
    <property type="molecule type" value="Genomic_DNA"/>
</dbReference>
<dbReference type="RefSeq" id="NP_599293.1">
    <property type="nucleotide sequence ID" value="NC_003450.3"/>
</dbReference>
<dbReference type="RefSeq" id="WP_011013340.1">
    <property type="nucleotide sequence ID" value="NC_006958.1"/>
</dbReference>
<dbReference type="SMR" id="Q8NU98"/>
<dbReference type="DIP" id="DIP-48321N"/>
<dbReference type="IntAct" id="Q8NU98">
    <property type="interactions" value="1"/>
</dbReference>
<dbReference type="STRING" id="196627.cg0057"/>
<dbReference type="GeneID" id="1021362"/>
<dbReference type="KEGG" id="cgb:cg0057"/>
<dbReference type="KEGG" id="cgl:Cgl0041"/>
<dbReference type="PATRIC" id="fig|196627.13.peg.42"/>
<dbReference type="eggNOG" id="COG0515">
    <property type="taxonomic scope" value="Bacteria"/>
</dbReference>
<dbReference type="eggNOG" id="COG2815">
    <property type="taxonomic scope" value="Bacteria"/>
</dbReference>
<dbReference type="HOGENOM" id="CLU_000288_135_2_11"/>
<dbReference type="OrthoDB" id="9762169at2"/>
<dbReference type="BioCyc" id="CORYNE:G18NG-9586-MONOMER"/>
<dbReference type="BRENDA" id="2.7.11.1">
    <property type="organism ID" value="960"/>
</dbReference>
<dbReference type="Proteomes" id="UP000000582">
    <property type="component" value="Chromosome"/>
</dbReference>
<dbReference type="Proteomes" id="UP000001009">
    <property type="component" value="Chromosome"/>
</dbReference>
<dbReference type="GO" id="GO:0005524">
    <property type="term" value="F:ATP binding"/>
    <property type="evidence" value="ECO:0007669"/>
    <property type="project" value="UniProtKB-KW"/>
</dbReference>
<dbReference type="GO" id="GO:0106310">
    <property type="term" value="F:protein serine kinase activity"/>
    <property type="evidence" value="ECO:0007669"/>
    <property type="project" value="RHEA"/>
</dbReference>
<dbReference type="GO" id="GO:0004674">
    <property type="term" value="F:protein serine/threonine kinase activity"/>
    <property type="evidence" value="ECO:0007669"/>
    <property type="project" value="UniProtKB-KW"/>
</dbReference>
<dbReference type="CDD" id="cd06577">
    <property type="entry name" value="PASTA_pknB"/>
    <property type="match status" value="3"/>
</dbReference>
<dbReference type="CDD" id="cd14014">
    <property type="entry name" value="STKc_PknB_like"/>
    <property type="match status" value="1"/>
</dbReference>
<dbReference type="FunFam" id="1.10.510.10:FF:000021">
    <property type="entry name" value="Serine/threonine protein kinase"/>
    <property type="match status" value="1"/>
</dbReference>
<dbReference type="FunFam" id="3.30.200.20:FF:000035">
    <property type="entry name" value="Serine/threonine protein kinase Stk1"/>
    <property type="match status" value="1"/>
</dbReference>
<dbReference type="Gene3D" id="3.30.10.20">
    <property type="match status" value="4"/>
</dbReference>
<dbReference type="Gene3D" id="3.30.200.20">
    <property type="entry name" value="Phosphorylase Kinase, domain 1"/>
    <property type="match status" value="1"/>
</dbReference>
<dbReference type="Gene3D" id="1.10.510.10">
    <property type="entry name" value="Transferase(Phosphotransferase) domain 1"/>
    <property type="match status" value="1"/>
</dbReference>
<dbReference type="InterPro" id="IPR011009">
    <property type="entry name" value="Kinase-like_dom_sf"/>
</dbReference>
<dbReference type="InterPro" id="IPR005543">
    <property type="entry name" value="PASTA_dom"/>
</dbReference>
<dbReference type="InterPro" id="IPR000719">
    <property type="entry name" value="Prot_kinase_dom"/>
</dbReference>
<dbReference type="InterPro" id="IPR017441">
    <property type="entry name" value="Protein_kinase_ATP_BS"/>
</dbReference>
<dbReference type="InterPro" id="IPR008271">
    <property type="entry name" value="Ser/Thr_kinase_AS"/>
</dbReference>
<dbReference type="NCBIfam" id="NF033483">
    <property type="entry name" value="PknB_PASTA_kin"/>
    <property type="match status" value="1"/>
</dbReference>
<dbReference type="PANTHER" id="PTHR43289">
    <property type="entry name" value="MITOGEN-ACTIVATED PROTEIN KINASE KINASE KINASE 20-RELATED"/>
    <property type="match status" value="1"/>
</dbReference>
<dbReference type="PANTHER" id="PTHR43289:SF6">
    <property type="entry name" value="SERINE_THREONINE-PROTEIN KINASE NEKL-3"/>
    <property type="match status" value="1"/>
</dbReference>
<dbReference type="Pfam" id="PF03793">
    <property type="entry name" value="PASTA"/>
    <property type="match status" value="3"/>
</dbReference>
<dbReference type="Pfam" id="PF00069">
    <property type="entry name" value="Pkinase"/>
    <property type="match status" value="1"/>
</dbReference>
<dbReference type="SMART" id="SM00740">
    <property type="entry name" value="PASTA"/>
    <property type="match status" value="3"/>
</dbReference>
<dbReference type="SMART" id="SM00220">
    <property type="entry name" value="S_TKc"/>
    <property type="match status" value="1"/>
</dbReference>
<dbReference type="SUPFAM" id="SSF56112">
    <property type="entry name" value="Protein kinase-like (PK-like)"/>
    <property type="match status" value="1"/>
</dbReference>
<dbReference type="PROSITE" id="PS51178">
    <property type="entry name" value="PASTA"/>
    <property type="match status" value="3"/>
</dbReference>
<dbReference type="PROSITE" id="PS00107">
    <property type="entry name" value="PROTEIN_KINASE_ATP"/>
    <property type="match status" value="1"/>
</dbReference>
<dbReference type="PROSITE" id="PS50011">
    <property type="entry name" value="PROTEIN_KINASE_DOM"/>
    <property type="match status" value="1"/>
</dbReference>
<dbReference type="PROSITE" id="PS00108">
    <property type="entry name" value="PROTEIN_KINASE_ST"/>
    <property type="match status" value="1"/>
</dbReference>
<evidence type="ECO:0000255" key="1">
    <source>
        <dbReference type="PROSITE-ProRule" id="PRU00159"/>
    </source>
</evidence>
<evidence type="ECO:0000255" key="2">
    <source>
        <dbReference type="PROSITE-ProRule" id="PRU00528"/>
    </source>
</evidence>
<evidence type="ECO:0000255" key="3">
    <source>
        <dbReference type="PROSITE-ProRule" id="PRU10027"/>
    </source>
</evidence>
<evidence type="ECO:0000256" key="4">
    <source>
        <dbReference type="SAM" id="MobiDB-lite"/>
    </source>
</evidence>
<name>PKN1_CORGL</name>
<comment type="catalytic activity">
    <reaction>
        <text>L-seryl-[protein] + ATP = O-phospho-L-seryl-[protein] + ADP + H(+)</text>
        <dbReference type="Rhea" id="RHEA:17989"/>
        <dbReference type="Rhea" id="RHEA-COMP:9863"/>
        <dbReference type="Rhea" id="RHEA-COMP:11604"/>
        <dbReference type="ChEBI" id="CHEBI:15378"/>
        <dbReference type="ChEBI" id="CHEBI:29999"/>
        <dbReference type="ChEBI" id="CHEBI:30616"/>
        <dbReference type="ChEBI" id="CHEBI:83421"/>
        <dbReference type="ChEBI" id="CHEBI:456216"/>
        <dbReference type="EC" id="2.7.11.1"/>
    </reaction>
</comment>
<comment type="catalytic activity">
    <reaction>
        <text>L-threonyl-[protein] + ATP = O-phospho-L-threonyl-[protein] + ADP + H(+)</text>
        <dbReference type="Rhea" id="RHEA:46608"/>
        <dbReference type="Rhea" id="RHEA-COMP:11060"/>
        <dbReference type="Rhea" id="RHEA-COMP:11605"/>
        <dbReference type="ChEBI" id="CHEBI:15378"/>
        <dbReference type="ChEBI" id="CHEBI:30013"/>
        <dbReference type="ChEBI" id="CHEBI:30616"/>
        <dbReference type="ChEBI" id="CHEBI:61977"/>
        <dbReference type="ChEBI" id="CHEBI:456216"/>
        <dbReference type="EC" id="2.7.11.1"/>
    </reaction>
</comment>
<comment type="similarity">
    <text evidence="1">Belongs to the protein kinase superfamily. Ser/Thr protein kinase family.</text>
</comment>
<organism>
    <name type="scientific">Corynebacterium glutamicum (strain ATCC 13032 / DSM 20300 / JCM 1318 / BCRC 11384 / CCUG 27702 / LMG 3730 / NBRC 12168 / NCIMB 10025 / NRRL B-2784 / 534)</name>
    <dbReference type="NCBI Taxonomy" id="196627"/>
    <lineage>
        <taxon>Bacteria</taxon>
        <taxon>Bacillati</taxon>
        <taxon>Actinomycetota</taxon>
        <taxon>Actinomycetes</taxon>
        <taxon>Mycobacteriales</taxon>
        <taxon>Corynebacteriaceae</taxon>
        <taxon>Corynebacterium</taxon>
    </lineage>
</organism>
<gene>
    <name type="primary">pknB</name>
    <name type="ordered locus">Cgl0041</name>
    <name type="ordered locus">cg0057</name>
</gene>
<feature type="chain" id="PRO_0000171197" description="Probable serine/threonine-protein kinase PknB">
    <location>
        <begin position="1"/>
        <end position="646"/>
    </location>
</feature>
<feature type="domain" description="Protein kinase" evidence="1">
    <location>
        <begin position="9"/>
        <end position="278"/>
    </location>
</feature>
<feature type="domain" description="PASTA 1" evidence="2">
    <location>
        <begin position="365"/>
        <end position="431"/>
    </location>
</feature>
<feature type="domain" description="PASTA 2" evidence="2">
    <location>
        <begin position="432"/>
        <end position="500"/>
    </location>
</feature>
<feature type="domain" description="PASTA 3" evidence="2">
    <location>
        <begin position="501"/>
        <end position="565"/>
    </location>
</feature>
<feature type="domain" description="PASTA 4" evidence="2">
    <location>
        <begin position="570"/>
        <end position="638"/>
    </location>
</feature>
<feature type="region of interest" description="Disordered" evidence="4">
    <location>
        <begin position="283"/>
        <end position="332"/>
    </location>
</feature>
<feature type="compositionally biased region" description="Low complexity" evidence="4">
    <location>
        <begin position="303"/>
        <end position="328"/>
    </location>
</feature>
<feature type="active site" description="Proton acceptor" evidence="1 3">
    <location>
        <position position="136"/>
    </location>
</feature>
<feature type="binding site" evidence="1">
    <location>
        <begin position="15"/>
        <end position="23"/>
    </location>
    <ligand>
        <name>ATP</name>
        <dbReference type="ChEBI" id="CHEBI:30616"/>
    </ligand>
</feature>
<feature type="binding site" evidence="1">
    <location>
        <position position="38"/>
    </location>
    <ligand>
        <name>ATP</name>
        <dbReference type="ChEBI" id="CHEBI:30616"/>
    </ligand>
</feature>
<proteinExistence type="inferred from homology"/>
<sequence>MTFVIADRYELDAVIGSGGMSEVFAATDTLIGREVAVKMLRIDLAKDPNFRERFRREAQNSGRLSHSSIVAVFDTGEVDKDGTSVPYIVMERVQGRNLREVVTEDGVFTPVEAANILIPVCEALQASHDAGIIHRDVKPANIMITNTGGVKVMDFGIARAVNDSTSAMTQTSAVIGTAQYLSPEQARGKPADARSDIYATGCVMYELVTGKPPFEGESPFAVAYQHVQEDPTPPSDFIADLTPTSAVNVDAVVLTAMAKHPADRYQTASEMAADLGRLSRNAVSHAARAHVETEETPEEPETRFSTRTSTQVAPAAGVAAASTGSGSSSRKRGSRGLTALAIVLSLGVVGVAGAFTYDYFANSSSTATSAIPNVEGLPQQEALTELQAAGFVVNIVEEASADVAEGLVIRANPSVGSEIRQGATVTITVSTGREMINIPDVSGMTLEDAARALEDVGLILNQNVREETSDDVESGLVIDQNPEAGQEVVVGSSVSLTMSSGTESIRVPNLTGMNWSQAEQNLISMGFNPTASYLDSSEPEGEVLSVSSQGTELPKGSSITVEVSNGMLIQAPDLARMSTEQAISALRAAGWTAPDQSLIVGDPIHTAALVDQNKIGFQSPTPATLFRKDAQVQVRLFEFDLAALVQ</sequence>